<comment type="function">
    <text evidence="1">Component of the cytochrome b6-f complex, which mediates electron transfer between photosystem II (PSII) and photosystem I (PSI), cyclic electron flow around PSI, and state transitions.</text>
</comment>
<comment type="subunit">
    <text evidence="1">The 4 large subunits of the cytochrome b6-f complex are cytochrome b6, subunit IV (17 kDa polypeptide, PetD), cytochrome f and the Rieske protein, while the 4 small subunits are PetG, PetL, PetM and PetN. The complex functions as a dimer (By similarity).</text>
</comment>
<comment type="subcellular location">
    <subcellularLocation>
        <location evidence="1">Plastid</location>
        <location evidence="1">Chloroplast thylakoid membrane</location>
        <topology evidence="1">Single-pass membrane protein</topology>
    </subcellularLocation>
</comment>
<comment type="similarity">
    <text evidence="3">Belongs to the PetN family.</text>
</comment>
<geneLocation type="chloroplast"/>
<keyword id="KW-0150">Chloroplast</keyword>
<keyword id="KW-0249">Electron transport</keyword>
<keyword id="KW-0472">Membrane</keyword>
<keyword id="KW-0602">Photosynthesis</keyword>
<keyword id="KW-0934">Plastid</keyword>
<keyword id="KW-1185">Reference proteome</keyword>
<keyword id="KW-0793">Thylakoid</keyword>
<keyword id="KW-0812">Transmembrane</keyword>
<keyword id="KW-1133">Transmembrane helix</keyword>
<keyword id="KW-0813">Transport</keyword>
<name>PETN_ARATH</name>
<feature type="chain" id="PRO_0000217100" description="Cytochrome b6-f complex subunit 8">
    <location>
        <begin position="1"/>
        <end position="29"/>
    </location>
</feature>
<feature type="transmembrane region" description="Helical" evidence="2">
    <location>
        <begin position="3"/>
        <end position="23"/>
    </location>
</feature>
<evidence type="ECO:0000250" key="1"/>
<evidence type="ECO:0000255" key="2"/>
<evidence type="ECO:0000305" key="3"/>
<dbReference type="EMBL" id="AP000423">
    <property type="protein sequence ID" value="BAA84378.1"/>
    <property type="molecule type" value="Genomic_DNA"/>
</dbReference>
<dbReference type="RefSeq" id="NP_051052.1">
    <property type="nucleotide sequence ID" value="NC_000932.1"/>
</dbReference>
<dbReference type="SMR" id="P61039"/>
<dbReference type="FunCoup" id="P61039">
    <property type="interactions" value="31"/>
</dbReference>
<dbReference type="STRING" id="3702.P61039"/>
<dbReference type="PaxDb" id="3702-ATCG00210.1"/>
<dbReference type="EnsemblPlants" id="ATCG00210.1">
    <property type="protein sequence ID" value="ATCG00210.1"/>
    <property type="gene ID" value="ATCG00210"/>
</dbReference>
<dbReference type="GeneID" id="844779"/>
<dbReference type="Gramene" id="ATCG00210.1">
    <property type="protein sequence ID" value="ATCG00210.1"/>
    <property type="gene ID" value="ATCG00210"/>
</dbReference>
<dbReference type="KEGG" id="ath:ArthCp015"/>
<dbReference type="Araport" id="ATCG00210"/>
<dbReference type="TAIR" id="ATCG00210">
    <property type="gene designation" value="YCF6"/>
</dbReference>
<dbReference type="HOGENOM" id="CLU_215774_2_0_1"/>
<dbReference type="InParanoid" id="P61039"/>
<dbReference type="PRO" id="PR:P61039"/>
<dbReference type="Proteomes" id="UP000006548">
    <property type="component" value="Chloroplast Pltd"/>
</dbReference>
<dbReference type="ExpressionAtlas" id="P61039">
    <property type="expression patterns" value="baseline and differential"/>
</dbReference>
<dbReference type="GO" id="GO:0009535">
    <property type="term" value="C:chloroplast thylakoid membrane"/>
    <property type="evidence" value="ECO:0007669"/>
    <property type="project" value="UniProtKB-SubCell"/>
</dbReference>
<dbReference type="GO" id="GO:0009512">
    <property type="term" value="C:cytochrome b6f complex"/>
    <property type="evidence" value="ECO:0007669"/>
    <property type="project" value="InterPro"/>
</dbReference>
<dbReference type="GO" id="GO:0045158">
    <property type="term" value="F:electron transporter, transferring electrons within cytochrome b6/f complex of photosystem II activity"/>
    <property type="evidence" value="ECO:0007669"/>
    <property type="project" value="InterPro"/>
</dbReference>
<dbReference type="GO" id="GO:0017004">
    <property type="term" value="P:cytochrome complex assembly"/>
    <property type="evidence" value="ECO:0007669"/>
    <property type="project" value="UniProtKB-UniRule"/>
</dbReference>
<dbReference type="GO" id="GO:0015979">
    <property type="term" value="P:photosynthesis"/>
    <property type="evidence" value="ECO:0007669"/>
    <property type="project" value="UniProtKB-KW"/>
</dbReference>
<dbReference type="HAMAP" id="MF_00395">
    <property type="entry name" value="Cytb6_f_PetN"/>
    <property type="match status" value="1"/>
</dbReference>
<dbReference type="InterPro" id="IPR036143">
    <property type="entry name" value="Cytochr_b6-f_cplx_su8_sf"/>
</dbReference>
<dbReference type="InterPro" id="IPR005497">
    <property type="entry name" value="Cytochrome_b6-f_cplx_su8"/>
</dbReference>
<dbReference type="Pfam" id="PF03742">
    <property type="entry name" value="PetN"/>
    <property type="match status" value="1"/>
</dbReference>
<dbReference type="SUPFAM" id="SSF103451">
    <property type="entry name" value="PetN subunit of the cytochrome b6f complex"/>
    <property type="match status" value="1"/>
</dbReference>
<reference key="1">
    <citation type="journal article" date="1999" name="DNA Res.">
        <title>Complete structure of the chloroplast genome of Arabidopsis thaliana.</title>
        <authorList>
            <person name="Sato S."/>
            <person name="Nakamura Y."/>
            <person name="Kaneko T."/>
            <person name="Asamizu E."/>
            <person name="Tabata S."/>
        </authorList>
    </citation>
    <scope>NUCLEOTIDE SEQUENCE [LARGE SCALE GENOMIC DNA]</scope>
    <source>
        <strain>cv. Columbia</strain>
    </source>
</reference>
<sequence>MDIVSLAWAALMVVFTFSLSLVVWGRSGL</sequence>
<organism>
    <name type="scientific">Arabidopsis thaliana</name>
    <name type="common">Mouse-ear cress</name>
    <dbReference type="NCBI Taxonomy" id="3702"/>
    <lineage>
        <taxon>Eukaryota</taxon>
        <taxon>Viridiplantae</taxon>
        <taxon>Streptophyta</taxon>
        <taxon>Embryophyta</taxon>
        <taxon>Tracheophyta</taxon>
        <taxon>Spermatophyta</taxon>
        <taxon>Magnoliopsida</taxon>
        <taxon>eudicotyledons</taxon>
        <taxon>Gunneridae</taxon>
        <taxon>Pentapetalae</taxon>
        <taxon>rosids</taxon>
        <taxon>malvids</taxon>
        <taxon>Brassicales</taxon>
        <taxon>Brassicaceae</taxon>
        <taxon>Camelineae</taxon>
        <taxon>Arabidopsis</taxon>
    </lineage>
</organism>
<proteinExistence type="inferred from homology"/>
<protein>
    <recommendedName>
        <fullName>Cytochrome b6-f complex subunit 8</fullName>
    </recommendedName>
    <alternativeName>
        <fullName>Cytochrome b6-f complex subunit PetN</fullName>
    </alternativeName>
    <alternativeName>
        <fullName>Cytochrome b6-f complex subunit VIII</fullName>
    </alternativeName>
</protein>
<accession>P61039</accession>
<accession>P12178</accession>
<accession>P56789</accession>
<gene>
    <name type="primary">petN</name>
    <name type="synonym">ycf6</name>
    <name type="ordered locus">AtCg00210</name>
</gene>